<proteinExistence type="inferred from homology"/>
<sequence length="96" mass="11153">MAKYEILYIIRPNIEEEAKNALVARFDSILTDNGATVVESKTWEKRRLAYEIQDFREGLYHIVNVEANDDAALKEFDRLSKINADILRHMIVKIDA</sequence>
<feature type="chain" id="PRO_1000133551" description="Small ribosomal subunit protein bS6">
    <location>
        <begin position="1"/>
        <end position="96"/>
    </location>
</feature>
<keyword id="KW-0687">Ribonucleoprotein</keyword>
<keyword id="KW-0689">Ribosomal protein</keyword>
<keyword id="KW-0694">RNA-binding</keyword>
<keyword id="KW-0699">rRNA-binding</keyword>
<evidence type="ECO:0000255" key="1">
    <source>
        <dbReference type="HAMAP-Rule" id="MF_00360"/>
    </source>
</evidence>
<evidence type="ECO:0000305" key="2"/>
<protein>
    <recommendedName>
        <fullName evidence="1">Small ribosomal subunit protein bS6</fullName>
    </recommendedName>
    <alternativeName>
        <fullName evidence="2">30S ribosomal protein S6</fullName>
    </alternativeName>
</protein>
<reference key="1">
    <citation type="journal article" date="2010" name="Genome Biol.">
        <title>Structure and dynamics of the pan-genome of Streptococcus pneumoniae and closely related species.</title>
        <authorList>
            <person name="Donati C."/>
            <person name="Hiller N.L."/>
            <person name="Tettelin H."/>
            <person name="Muzzi A."/>
            <person name="Croucher N.J."/>
            <person name="Angiuoli S.V."/>
            <person name="Oggioni M."/>
            <person name="Dunning Hotopp J.C."/>
            <person name="Hu F.Z."/>
            <person name="Riley D.R."/>
            <person name="Covacci A."/>
            <person name="Mitchell T.J."/>
            <person name="Bentley S.D."/>
            <person name="Kilian M."/>
            <person name="Ehrlich G.D."/>
            <person name="Rappuoli R."/>
            <person name="Moxon E.R."/>
            <person name="Masignani V."/>
        </authorList>
    </citation>
    <scope>NUCLEOTIDE SEQUENCE [LARGE SCALE GENOMIC DNA]</scope>
    <source>
        <strain>Taiwan19F-14</strain>
    </source>
</reference>
<name>RS6_STRZT</name>
<dbReference type="EMBL" id="CP000921">
    <property type="protein sequence ID" value="ACO22789.1"/>
    <property type="molecule type" value="Genomic_DNA"/>
</dbReference>
<dbReference type="RefSeq" id="WP_001151785.1">
    <property type="nucleotide sequence ID" value="NC_012469.1"/>
</dbReference>
<dbReference type="SMR" id="C1CSF9"/>
<dbReference type="GeneID" id="45653220"/>
<dbReference type="KEGG" id="snt:SPT_1479"/>
<dbReference type="HOGENOM" id="CLU_113441_5_3_9"/>
<dbReference type="GO" id="GO:0005737">
    <property type="term" value="C:cytoplasm"/>
    <property type="evidence" value="ECO:0007669"/>
    <property type="project" value="UniProtKB-ARBA"/>
</dbReference>
<dbReference type="GO" id="GO:1990904">
    <property type="term" value="C:ribonucleoprotein complex"/>
    <property type="evidence" value="ECO:0007669"/>
    <property type="project" value="UniProtKB-KW"/>
</dbReference>
<dbReference type="GO" id="GO:0005840">
    <property type="term" value="C:ribosome"/>
    <property type="evidence" value="ECO:0007669"/>
    <property type="project" value="UniProtKB-KW"/>
</dbReference>
<dbReference type="GO" id="GO:0070181">
    <property type="term" value="F:small ribosomal subunit rRNA binding"/>
    <property type="evidence" value="ECO:0007669"/>
    <property type="project" value="TreeGrafter"/>
</dbReference>
<dbReference type="GO" id="GO:0003735">
    <property type="term" value="F:structural constituent of ribosome"/>
    <property type="evidence" value="ECO:0007669"/>
    <property type="project" value="InterPro"/>
</dbReference>
<dbReference type="GO" id="GO:0006412">
    <property type="term" value="P:translation"/>
    <property type="evidence" value="ECO:0007669"/>
    <property type="project" value="UniProtKB-UniRule"/>
</dbReference>
<dbReference type="CDD" id="cd00473">
    <property type="entry name" value="bS6"/>
    <property type="match status" value="1"/>
</dbReference>
<dbReference type="FunFam" id="3.30.70.60:FF:000002">
    <property type="entry name" value="30S ribosomal protein S6"/>
    <property type="match status" value="1"/>
</dbReference>
<dbReference type="Gene3D" id="3.30.70.60">
    <property type="match status" value="1"/>
</dbReference>
<dbReference type="HAMAP" id="MF_00360">
    <property type="entry name" value="Ribosomal_bS6"/>
    <property type="match status" value="1"/>
</dbReference>
<dbReference type="InterPro" id="IPR000529">
    <property type="entry name" value="Ribosomal_bS6"/>
</dbReference>
<dbReference type="InterPro" id="IPR035980">
    <property type="entry name" value="Ribosomal_bS6_sf"/>
</dbReference>
<dbReference type="InterPro" id="IPR020814">
    <property type="entry name" value="Ribosomal_S6_plastid/chlpt"/>
</dbReference>
<dbReference type="InterPro" id="IPR014717">
    <property type="entry name" value="Transl_elong_EF1B/ribsomal_bS6"/>
</dbReference>
<dbReference type="NCBIfam" id="TIGR00166">
    <property type="entry name" value="S6"/>
    <property type="match status" value="1"/>
</dbReference>
<dbReference type="PANTHER" id="PTHR21011">
    <property type="entry name" value="MITOCHONDRIAL 28S RIBOSOMAL PROTEIN S6"/>
    <property type="match status" value="1"/>
</dbReference>
<dbReference type="PANTHER" id="PTHR21011:SF1">
    <property type="entry name" value="SMALL RIBOSOMAL SUBUNIT PROTEIN BS6M"/>
    <property type="match status" value="1"/>
</dbReference>
<dbReference type="Pfam" id="PF01250">
    <property type="entry name" value="Ribosomal_S6"/>
    <property type="match status" value="1"/>
</dbReference>
<dbReference type="SUPFAM" id="SSF54995">
    <property type="entry name" value="Ribosomal protein S6"/>
    <property type="match status" value="1"/>
</dbReference>
<organism>
    <name type="scientific">Streptococcus pneumoniae (strain Taiwan19F-14)</name>
    <dbReference type="NCBI Taxonomy" id="487213"/>
    <lineage>
        <taxon>Bacteria</taxon>
        <taxon>Bacillati</taxon>
        <taxon>Bacillota</taxon>
        <taxon>Bacilli</taxon>
        <taxon>Lactobacillales</taxon>
        <taxon>Streptococcaceae</taxon>
        <taxon>Streptococcus</taxon>
    </lineage>
</organism>
<comment type="function">
    <text evidence="1">Binds together with bS18 to 16S ribosomal RNA.</text>
</comment>
<comment type="similarity">
    <text evidence="1">Belongs to the bacterial ribosomal protein bS6 family.</text>
</comment>
<gene>
    <name evidence="1" type="primary">rpsF</name>
    <name type="ordered locus">SPT_1479</name>
</gene>
<accession>C1CSF9</accession>